<protein>
    <recommendedName>
        <fullName evidence="7">Acyl-CoA synthetase ACTT5</fullName>
        <ecNumber evidence="10">6.2.1.-</ecNumber>
    </recommendedName>
    <alternativeName>
        <fullName evidence="7">ACT-toxin biosynthesis protein 5</fullName>
    </alternativeName>
</protein>
<sequence length="578" mass="64512">MLCKFQVFNPIAIELSPHIGNQLLECRGYCKSPALFLKKICPSLKAVAKHPLIILKVYHDADDESRTLSRRQGLSIVRKLVAGFRKAGLKKGDCFAVTSFSDIMYSMVFLGGVAAGRVFSGTNPAYRVAEMRHHIRTTEVKFFIVEPELLDVVIEGATREGIPKDCIFVFNVRGQKVPYGFRSWEWLLQHGEEDWERITDLETLKRTDVARLTTSGTTGLPKTACQSHYNATSFHTVIATKSQASITWEPRTISPLPMFHVATVPAVHASPFRTGHPIWIMRRFKLEPFLAGIEKHQVTNLAVIPPLVTAIINSPLSKKYSLKSVRTAVSGVAPLDAGSQREMRKLLAPGVTFTQLWGLTETTGAMTLFPYPEEDDTGSVGRLIPNTDVKLVDEDGKDITAFDVRGEICVRGPTVVRQYYRNSKANAETWDEDGYLHTGDILYCDSKTKLWYIVDRKKELIKVRGFQVAPPELEAALLQAKDDIADVAVIGLKSQPDSDAERPRAYVVRKPGSDITEAGVKRLIDDHLASYKQLTGGVVFLDEIPRSPTGKILKRVLREWAGTEEKENVTTRRALIPL</sequence>
<feature type="chain" id="PRO_0000444862" description="Acyl-CoA synthetase ACTT5">
    <location>
        <begin position="1"/>
        <end position="578"/>
    </location>
</feature>
<feature type="region of interest" description="AMP-binding" evidence="1">
    <location>
        <begin position="472"/>
        <end position="551"/>
    </location>
</feature>
<feature type="binding site" evidence="1">
    <location>
        <begin position="211"/>
        <end position="222"/>
    </location>
    <ligand>
        <name>AMP</name>
        <dbReference type="ChEBI" id="CHEBI:456215"/>
    </ligand>
</feature>
<dbReference type="EC" id="6.2.1.-" evidence="10"/>
<dbReference type="EMBL" id="AB444613">
    <property type="protein sequence ID" value="BAH83502.1"/>
    <property type="molecule type" value="Genomic_DNA"/>
</dbReference>
<dbReference type="SMR" id="C5NN18"/>
<dbReference type="VEuPathDB" id="FungiDB:CC77DRAFT_979861"/>
<dbReference type="GO" id="GO:0005524">
    <property type="term" value="F:ATP binding"/>
    <property type="evidence" value="ECO:0007669"/>
    <property type="project" value="UniProtKB-KW"/>
</dbReference>
<dbReference type="GO" id="GO:0016405">
    <property type="term" value="F:CoA-ligase activity"/>
    <property type="evidence" value="ECO:0007669"/>
    <property type="project" value="TreeGrafter"/>
</dbReference>
<dbReference type="GO" id="GO:0019748">
    <property type="term" value="P:secondary metabolic process"/>
    <property type="evidence" value="ECO:0007669"/>
    <property type="project" value="TreeGrafter"/>
</dbReference>
<dbReference type="CDD" id="cd05911">
    <property type="entry name" value="Firefly_Luc_like"/>
    <property type="match status" value="1"/>
</dbReference>
<dbReference type="Gene3D" id="3.30.300.30">
    <property type="match status" value="1"/>
</dbReference>
<dbReference type="Gene3D" id="3.40.50.12780">
    <property type="entry name" value="N-terminal domain of ligase-like"/>
    <property type="match status" value="1"/>
</dbReference>
<dbReference type="InterPro" id="IPR025110">
    <property type="entry name" value="AMP-bd_C"/>
</dbReference>
<dbReference type="InterPro" id="IPR045851">
    <property type="entry name" value="AMP-bd_C_sf"/>
</dbReference>
<dbReference type="InterPro" id="IPR000873">
    <property type="entry name" value="AMP-dep_synth/lig_dom"/>
</dbReference>
<dbReference type="InterPro" id="IPR042099">
    <property type="entry name" value="ANL_N_sf"/>
</dbReference>
<dbReference type="PANTHER" id="PTHR24096:SF265">
    <property type="entry name" value="ENZYME, PUTATIVE (AFU_ORTHOLOGUE AFUA_5G14270)-RELATED"/>
    <property type="match status" value="1"/>
</dbReference>
<dbReference type="PANTHER" id="PTHR24096">
    <property type="entry name" value="LONG-CHAIN-FATTY-ACID--COA LIGASE"/>
    <property type="match status" value="1"/>
</dbReference>
<dbReference type="Pfam" id="PF00501">
    <property type="entry name" value="AMP-binding"/>
    <property type="match status" value="1"/>
</dbReference>
<dbReference type="Pfam" id="PF13193">
    <property type="entry name" value="AMP-binding_C"/>
    <property type="match status" value="1"/>
</dbReference>
<dbReference type="SUPFAM" id="SSF56801">
    <property type="entry name" value="Acetyl-CoA synthetase-like"/>
    <property type="match status" value="1"/>
</dbReference>
<reference key="1">
    <citation type="journal article" date="2009" name="Phytopathology">
        <title>Function of genes encoding acyl-CoA synthetase and enoyl-CoA hydratase for host-selective act-toxin biosynthesis in the tangerine pathotype of Alternaria alternata.</title>
        <authorList>
            <person name="Miyamoto M."/>
            <person name="Ishii Y."/>
            <person name="Honda A."/>
            <person name="Masunaka A."/>
            <person name="Tsuge T."/>
            <person name="Yamamoto M."/>
            <person name="Ohtani K."/>
            <person name="Fukumoto T."/>
            <person name="Gomi K."/>
            <person name="Peever T.L."/>
            <person name="Akimitsu K."/>
        </authorList>
    </citation>
    <scope>NUCLEOTIDE SEQUENCE [GENOMIC DNA]</scope>
    <scope>FUNCTION</scope>
    <scope>DISRUPTION PHENOTYPE</scope>
    <scope>PATHWAY</scope>
    <source>
        <strain>SH20</strain>
    </source>
</reference>
<reference key="2">
    <citation type="journal article" date="2000" name="Phytopathology">
        <title>Distribution and characterization of AKT homologs in the tangerine pathotype of Alternaria alternata.</title>
        <authorList>
            <person name="Masunaka A."/>
            <person name="Tanaka A."/>
            <person name="Tsuge T."/>
            <person name="Peever T.L."/>
            <person name="Timmer L.W."/>
            <person name="Yamamoto M."/>
            <person name="Yamamoto H."/>
            <person name="Akimitsu K."/>
        </authorList>
    </citation>
    <scope>FUNCTION</scope>
</reference>
<reference key="3">
    <citation type="journal article" date="2008" name="Mol. Plant Microbe Interact.">
        <title>Functional analysis of a multicopy host-selective ACT-toxin biosynthesis gene in the tangerine pathotype of Alternaria alternata using RNA silencing.</title>
        <authorList>
            <person name="Miyamoto Y."/>
            <person name="Masunaka A."/>
            <person name="Tsuge T."/>
            <person name="Yamamoto M."/>
            <person name="Ohtani K."/>
            <person name="Fukumoto T."/>
            <person name="Gomi K."/>
            <person name="Peever T.L."/>
            <person name="Akimitsu K."/>
        </authorList>
    </citation>
    <scope>FUNCTION</scope>
    <source>
        <strain>SH20</strain>
    </source>
</reference>
<reference key="4">
    <citation type="journal article" date="2010" name="Phytopathology">
        <title>Role of the host-selective ACT-toxin synthesis gene ACTTS2 encoding an enoyl-reductase in pathogenicity of the tangerine pathotype of Alternaria alternata.</title>
        <authorList>
            <person name="Ajiro N."/>
            <person name="Miyamoto Y."/>
            <person name="Masunaka A."/>
            <person name="Tsuge T."/>
            <person name="Yamamoto M."/>
            <person name="Ohtani K."/>
            <person name="Fukumoto T."/>
            <person name="Gomi K."/>
            <person name="Peever T.L."/>
            <person name="Izumi Y."/>
            <person name="Tada Y."/>
            <person name="Akimitsu K."/>
        </authorList>
    </citation>
    <scope>FUNCTION</scope>
    <source>
        <strain>SH20</strain>
    </source>
</reference>
<reference key="5">
    <citation type="journal article" date="2010" name="Mol. Plant Microbe Interact.">
        <title>ACTTS3 encoding a polyketide synthase is essential for the biosynthesis of ACT-toxin and pathogenicity in the tangerine pathotype of Alternaria alternata.</title>
        <authorList>
            <person name="Miyamoto Y."/>
            <person name="Masunaka A."/>
            <person name="Tsuge T."/>
            <person name="Yamamoto M."/>
            <person name="Ohtani K."/>
            <person name="Fukumoto T."/>
            <person name="Gomi K."/>
            <person name="Peever T.L."/>
            <person name="Tada Y."/>
            <person name="Ichimura K."/>
            <person name="Akimitsu K."/>
        </authorList>
    </citation>
    <scope>FUNCTION</scope>
    <source>
        <strain>SH20</strain>
    </source>
</reference>
<reference key="6">
    <citation type="journal article" date="2013" name="FEMS Microbiol. Rev.">
        <title>Host-selective toxins produced by the plant pathogenic fungus Alternaria alternata.</title>
        <authorList>
            <person name="Tsuge T."/>
            <person name="Harimoto Y."/>
            <person name="Akimitsu K."/>
            <person name="Ohtani K."/>
            <person name="Kodama M."/>
            <person name="Akagi Y."/>
            <person name="Egusa M."/>
            <person name="Yamamoto M."/>
            <person name="Otani H."/>
        </authorList>
    </citation>
    <scope>REVIEW ON HOST-SELECTIVE TOXINS</scope>
</reference>
<accession>C5NN18</accession>
<gene>
    <name evidence="7" type="primary">ACTT5</name>
</gene>
<comment type="function">
    <text evidence="2 3 4 5 6 8">Acyl-CoA synthetase; part of the gene clusters that mediate the biosynthesis of the host-selective toxins (HSTs) ACT-toxins responsible for brown spot of tangerine disease by the tangerine pathotype which affects tangerines and mandarins (PubMed:19271978). ACT-toxins consist of three moieties, 9,10-epoxy-8-hydroxy-9-methyl-decatrienoic acid (EDA), valine and a polyketide (PubMed:22846083). ACT-toxin I is toxic to both citrus and pear; toxin II the 5''-deoxy derivative of ACT-toxin I, is highly toxic to pear and slightly toxic to citrus (PubMed:22846083). On cellular level, ACT-toxins affect plasma membrane of susceptible cells and cause a sudden increase in loss of K(+) after a few minutes of toxin treatment (PubMed:22846083). The acyl-CoA ligase ACTT1, the hydrolase ACTT2, the enoyl-CoA hydratases ACTT3 and ACTT6, and the acyl-CoA synthetase ACTT5 are all involved in the biosynthesis of the AK-, AF- and ACT-toxin common 9,10-epoxy-8-hydroxy-9-methyl-decatrienoic acid (EDA) structural moiety (PubMed:18944496, PubMed:18986255, PubMed:19271978). The exact role of each enzyme, and of additional enzymes identified within the AF-toxin clusters have still to be determined (PubMed:18944496, PubMed:18986255, PubMed:19271978). On the other hand, ACTTS1 to ACTTS4 are specific to the tangerine pathotype (PubMed:22846083). The function of ACTTS3 is to elongate the polyketide chain portion of ACT-toxin that is unique to this toxin (PubMed:20192828). The enoyl-reductase ACTTS2 might complement the missing enoyl-reductase (ER) domain in ACTTS3 in the synthesis of the polyketide portion of ACT-toxin (PubMed:20055645). The roles of the nonribosomal peptide synthetases-related proteins ACTTS1 and ACTTS4 have also still not been elucidated (PubMed:22846083).</text>
</comment>
<comment type="pathway">
    <text evidence="4">Mycotoxin biosynthesis.</text>
</comment>
<comment type="disruption phenotype">
    <text evidence="4">Leads to drastic reduction of ACT-toxin production and disease severity after inoculation on detached leaves.</text>
</comment>
<comment type="miscellaneous">
    <text evidence="3">Gene clusters encoding host-selective toxins (HSTs) are localized on conditionally dispensable chromosomes (CDCs), also called supernumerary chromosomes, where they are present in multiple copies (PubMed:18986255). The CDCs are not essential for saprophytic growth but controls host-selective pathogenicity (PubMed:18986255). Although conventional disruption could not be accomplished due to the high number of the copies identified in the genome, the high sequence identity among these copies is likely an advantage for RNA silencing, because it allows knockdown of all copies of this gene simultaneously (PubMed:18986255).</text>
</comment>
<comment type="similarity">
    <text evidence="9">Belongs to the ATP-dependent AMP-binding enzyme family.</text>
</comment>
<name>ACTT5_ALTAL</name>
<organism>
    <name type="scientific">Alternaria alternata</name>
    <name type="common">Alternaria rot fungus</name>
    <name type="synonym">Torula alternata</name>
    <dbReference type="NCBI Taxonomy" id="5599"/>
    <lineage>
        <taxon>Eukaryota</taxon>
        <taxon>Fungi</taxon>
        <taxon>Dikarya</taxon>
        <taxon>Ascomycota</taxon>
        <taxon>Pezizomycotina</taxon>
        <taxon>Dothideomycetes</taxon>
        <taxon>Pleosporomycetidae</taxon>
        <taxon>Pleosporales</taxon>
        <taxon>Pleosporineae</taxon>
        <taxon>Pleosporaceae</taxon>
        <taxon>Alternaria</taxon>
        <taxon>Alternaria sect. Alternaria</taxon>
        <taxon>Alternaria alternata complex</taxon>
    </lineage>
</organism>
<proteinExistence type="inferred from homology"/>
<keyword id="KW-0067">ATP-binding</keyword>
<keyword id="KW-0436">Ligase</keyword>
<keyword id="KW-0547">Nucleotide-binding</keyword>
<keyword id="KW-0843">Virulence</keyword>
<evidence type="ECO:0000255" key="1"/>
<evidence type="ECO:0000269" key="2">
    <source>
    </source>
</evidence>
<evidence type="ECO:0000269" key="3">
    <source>
    </source>
</evidence>
<evidence type="ECO:0000269" key="4">
    <source>
    </source>
</evidence>
<evidence type="ECO:0000269" key="5">
    <source>
    </source>
</evidence>
<evidence type="ECO:0000269" key="6">
    <source>
    </source>
</evidence>
<evidence type="ECO:0000303" key="7">
    <source>
    </source>
</evidence>
<evidence type="ECO:0000303" key="8">
    <source>
    </source>
</evidence>
<evidence type="ECO:0000305" key="9"/>
<evidence type="ECO:0000305" key="10">
    <source>
    </source>
</evidence>